<name>RPOE_STRU0</name>
<evidence type="ECO:0000255" key="1">
    <source>
        <dbReference type="HAMAP-Rule" id="MF_00357"/>
    </source>
</evidence>
<evidence type="ECO:0000255" key="2">
    <source>
        <dbReference type="PROSITE-ProRule" id="PRU01261"/>
    </source>
</evidence>
<evidence type="ECO:0000256" key="3">
    <source>
        <dbReference type="SAM" id="MobiDB-lite"/>
    </source>
</evidence>
<comment type="function">
    <text evidence="1">Participates in both the initiation and recycling phases of transcription. In the presence of the delta subunit, RNAP displays an increased specificity of transcription, a decreased affinity for nucleic acids, and an increased efficiency of RNA synthesis because of enhanced recycling.</text>
</comment>
<comment type="subunit">
    <text evidence="1">RNAP is composed of a core of 2 alpha, a beta and a beta' subunits. The core is associated with a delta subunit and one of several sigma factors.</text>
</comment>
<comment type="similarity">
    <text evidence="1">Belongs to the RpoE family.</text>
</comment>
<dbReference type="EMBL" id="AM946015">
    <property type="protein sequence ID" value="CAR40896.1"/>
    <property type="molecule type" value="Genomic_DNA"/>
</dbReference>
<dbReference type="RefSeq" id="WP_012657867.1">
    <property type="nucleotide sequence ID" value="NC_012004.1"/>
</dbReference>
<dbReference type="SMR" id="B9DTJ7"/>
<dbReference type="STRING" id="218495.SUB0325"/>
<dbReference type="GeneID" id="93825623"/>
<dbReference type="KEGG" id="sub:SUB0325"/>
<dbReference type="eggNOG" id="COG3343">
    <property type="taxonomic scope" value="Bacteria"/>
</dbReference>
<dbReference type="HOGENOM" id="CLU_116648_0_0_9"/>
<dbReference type="OrthoDB" id="401223at2"/>
<dbReference type="Proteomes" id="UP000000449">
    <property type="component" value="Chromosome"/>
</dbReference>
<dbReference type="GO" id="GO:0000428">
    <property type="term" value="C:DNA-directed RNA polymerase complex"/>
    <property type="evidence" value="ECO:0007669"/>
    <property type="project" value="UniProtKB-KW"/>
</dbReference>
<dbReference type="GO" id="GO:0003899">
    <property type="term" value="F:DNA-directed RNA polymerase activity"/>
    <property type="evidence" value="ECO:0007669"/>
    <property type="project" value="UniProtKB-UniRule"/>
</dbReference>
<dbReference type="GO" id="GO:0006351">
    <property type="term" value="P:DNA-templated transcription"/>
    <property type="evidence" value="ECO:0007669"/>
    <property type="project" value="InterPro"/>
</dbReference>
<dbReference type="GO" id="GO:0006355">
    <property type="term" value="P:regulation of DNA-templated transcription"/>
    <property type="evidence" value="ECO:0007669"/>
    <property type="project" value="UniProtKB-UniRule"/>
</dbReference>
<dbReference type="Gene3D" id="1.10.10.1250">
    <property type="entry name" value="RNA polymerase, subunit delta, N-terminal domain"/>
    <property type="match status" value="1"/>
</dbReference>
<dbReference type="HAMAP" id="MF_00357">
    <property type="entry name" value="RNApol_bact_RpoE"/>
    <property type="match status" value="1"/>
</dbReference>
<dbReference type="InterPro" id="IPR007759">
    <property type="entry name" value="Asxl_HARE-HTH"/>
</dbReference>
<dbReference type="InterPro" id="IPR038087">
    <property type="entry name" value="RNAP_delta_N_dom_sf"/>
</dbReference>
<dbReference type="InterPro" id="IPR029757">
    <property type="entry name" value="RpoE"/>
</dbReference>
<dbReference type="NCBIfam" id="TIGR04567">
    <property type="entry name" value="RNAP_delt_lowGC"/>
    <property type="match status" value="1"/>
</dbReference>
<dbReference type="Pfam" id="PF05066">
    <property type="entry name" value="HARE-HTH"/>
    <property type="match status" value="1"/>
</dbReference>
<dbReference type="PROSITE" id="PS51913">
    <property type="entry name" value="HTH_HARE"/>
    <property type="match status" value="1"/>
</dbReference>
<protein>
    <recommendedName>
        <fullName evidence="1">Probable DNA-directed RNA polymerase subunit delta</fullName>
    </recommendedName>
    <alternativeName>
        <fullName evidence="1">RNAP delta factor</fullName>
    </alternativeName>
</protein>
<reference key="1">
    <citation type="journal article" date="2009" name="BMC Genomics">
        <title>Evidence for niche adaptation in the genome of the bovine pathogen Streptococcus uberis.</title>
        <authorList>
            <person name="Ward P.N."/>
            <person name="Holden M.T.G."/>
            <person name="Leigh J.A."/>
            <person name="Lennard N."/>
            <person name="Bignell A."/>
            <person name="Barron A."/>
            <person name="Clark L."/>
            <person name="Quail M.A."/>
            <person name="Woodward J."/>
            <person name="Barrell B.G."/>
            <person name="Egan S.A."/>
            <person name="Field T.R."/>
            <person name="Maskell D."/>
            <person name="Kehoe M."/>
            <person name="Dowson C.G."/>
            <person name="Chanter N."/>
            <person name="Whatmore A.M."/>
            <person name="Bentley S.D."/>
            <person name="Parkhill J."/>
        </authorList>
    </citation>
    <scope>NUCLEOTIDE SEQUENCE [LARGE SCALE GENOMIC DNA]</scope>
    <source>
        <strain>ATCC BAA-854 / 0140J</strain>
    </source>
</reference>
<gene>
    <name evidence="1" type="primary">rpoE</name>
    <name type="ordered locus">SUB0325</name>
</gene>
<organism>
    <name type="scientific">Streptococcus uberis (strain ATCC BAA-854 / 0140J)</name>
    <dbReference type="NCBI Taxonomy" id="218495"/>
    <lineage>
        <taxon>Bacteria</taxon>
        <taxon>Bacillati</taxon>
        <taxon>Bacillota</taxon>
        <taxon>Bacilli</taxon>
        <taxon>Lactobacillales</taxon>
        <taxon>Streptococcaceae</taxon>
        <taxon>Streptococcus</taxon>
    </lineage>
</organism>
<accession>B9DTJ7</accession>
<proteinExistence type="inferred from homology"/>
<keyword id="KW-0240">DNA-directed RNA polymerase</keyword>
<keyword id="KW-0548">Nucleotidyltransferase</keyword>
<keyword id="KW-1185">Reference proteome</keyword>
<keyword id="KW-0804">Transcription</keyword>
<keyword id="KW-0808">Transferase</keyword>
<sequence length="188" mass="21811">MKLDIFAGQEKSELSMIEVARAILEERGRDNEVYFSDLVNDIQTFLGKSDADIRQALPFFYTDLNTDGSFIPLGDNKWGLRSWYAIDEIDEEIITLEDEEDGAPKRKKKRVNAFMDGDEDAIDYSDDDPEDEDFTEETSDVEYDEEDPDDEKSEVESYDSELNEIIPEDDIEEVEINEEDDEDDEEEE</sequence>
<feature type="chain" id="PRO_1000133452" description="Probable DNA-directed RNA polymerase subunit delta">
    <location>
        <begin position="1"/>
        <end position="188"/>
    </location>
</feature>
<feature type="domain" description="HTH HARE-type" evidence="2">
    <location>
        <begin position="14"/>
        <end position="83"/>
    </location>
</feature>
<feature type="region of interest" description="Disordered" evidence="3">
    <location>
        <begin position="117"/>
        <end position="188"/>
    </location>
</feature>